<gene>
    <name type="primary">mif4gd-a</name>
</gene>
<keyword id="KW-0963">Cytoplasm</keyword>
<keyword id="KW-0539">Nucleus</keyword>
<keyword id="KW-1185">Reference proteome</keyword>
<keyword id="KW-0810">Translation regulation</keyword>
<dbReference type="EMBL" id="BC133785">
    <property type="protein sequence ID" value="AAI33786.1"/>
    <property type="molecule type" value="mRNA"/>
</dbReference>
<dbReference type="RefSeq" id="NP_001091421.1">
    <property type="nucleotide sequence ID" value="NM_001097952.2"/>
</dbReference>
<dbReference type="RefSeq" id="XP_018089382.1">
    <property type="nucleotide sequence ID" value="XM_018233893.1"/>
</dbReference>
<dbReference type="RefSeq" id="XP_018089383.1">
    <property type="nucleotide sequence ID" value="XM_018233894.1"/>
</dbReference>
<dbReference type="RefSeq" id="XP_018089384.1">
    <property type="nucleotide sequence ID" value="XM_018233895.1"/>
</dbReference>
<dbReference type="RefSeq" id="XP_018089385.1">
    <property type="nucleotide sequence ID" value="XM_018233896.1"/>
</dbReference>
<dbReference type="SMR" id="A3KND5"/>
<dbReference type="GeneID" id="100049112"/>
<dbReference type="KEGG" id="xla:100049112"/>
<dbReference type="AGR" id="Xenbase:XB-GENE-5757663"/>
<dbReference type="CTD" id="100049112"/>
<dbReference type="Xenbase" id="XB-GENE-5757663">
    <property type="gene designation" value="mif4gd.L"/>
</dbReference>
<dbReference type="OMA" id="VNDWVCL"/>
<dbReference type="OrthoDB" id="6357832at2759"/>
<dbReference type="Proteomes" id="UP000186698">
    <property type="component" value="Chromosome 9_10L"/>
</dbReference>
<dbReference type="Bgee" id="100049112">
    <property type="expression patterns" value="Expressed in egg cell and 19 other cell types or tissues"/>
</dbReference>
<dbReference type="GO" id="GO:0005829">
    <property type="term" value="C:cytosol"/>
    <property type="evidence" value="ECO:0000318"/>
    <property type="project" value="GO_Central"/>
</dbReference>
<dbReference type="GO" id="GO:0005634">
    <property type="term" value="C:nucleus"/>
    <property type="evidence" value="ECO:0007669"/>
    <property type="project" value="UniProtKB-SubCell"/>
</dbReference>
<dbReference type="GO" id="GO:0003723">
    <property type="term" value="F:RNA binding"/>
    <property type="evidence" value="ECO:0007669"/>
    <property type="project" value="InterPro"/>
</dbReference>
<dbReference type="GO" id="GO:0008494">
    <property type="term" value="F:translation activator activity"/>
    <property type="evidence" value="ECO:0000318"/>
    <property type="project" value="GO_Central"/>
</dbReference>
<dbReference type="GO" id="GO:0006446">
    <property type="term" value="P:regulation of translational initiation"/>
    <property type="evidence" value="ECO:0000318"/>
    <property type="project" value="GO_Central"/>
</dbReference>
<dbReference type="FunFam" id="1.25.40.180:FF:000108">
    <property type="entry name" value="MIF4G domain-containing protein A"/>
    <property type="match status" value="1"/>
</dbReference>
<dbReference type="Gene3D" id="1.25.40.180">
    <property type="match status" value="1"/>
</dbReference>
<dbReference type="InterPro" id="IPR016024">
    <property type="entry name" value="ARM-type_fold"/>
</dbReference>
<dbReference type="InterPro" id="IPR003890">
    <property type="entry name" value="MIF4G-like_typ-3"/>
</dbReference>
<dbReference type="InterPro" id="IPR051367">
    <property type="entry name" value="mRNA_TranslReg/HistoneTransl"/>
</dbReference>
<dbReference type="PANTHER" id="PTHR23254">
    <property type="entry name" value="EIF4G DOMAIN PROTEIN"/>
    <property type="match status" value="1"/>
</dbReference>
<dbReference type="PANTHER" id="PTHR23254:SF17">
    <property type="entry name" value="MIF4G DOMAIN-CONTAINING PROTEIN"/>
    <property type="match status" value="1"/>
</dbReference>
<dbReference type="Pfam" id="PF02854">
    <property type="entry name" value="MIF4G"/>
    <property type="match status" value="1"/>
</dbReference>
<dbReference type="SMART" id="SM00543">
    <property type="entry name" value="MIF4G"/>
    <property type="match status" value="1"/>
</dbReference>
<dbReference type="SUPFAM" id="SSF48371">
    <property type="entry name" value="ARM repeat"/>
    <property type="match status" value="1"/>
</dbReference>
<sequence length="223" mass="25950">MADSEEQEDYKMQAFDADIQNLLKTALKEPGNVDLEKAANVIADQSLRDTTFSREAGRMCYTIIQAESKQTGRTMFRSSLLNRLQVEYKNRKETRARSLQEWVCYVGFMCNVFDYLRVNNMPMLALVHPVYDCLFDLVQPESLKREEEVDCLVLQLHRVGEQLEKMNCQRMDDLFSQLRDSFLLQGGLSSLTQLLLLEMIEYRAAGWRMTDAAQNYYYSEVSD</sequence>
<accession>A3KND5</accession>
<organism>
    <name type="scientific">Xenopus laevis</name>
    <name type="common">African clawed frog</name>
    <dbReference type="NCBI Taxonomy" id="8355"/>
    <lineage>
        <taxon>Eukaryota</taxon>
        <taxon>Metazoa</taxon>
        <taxon>Chordata</taxon>
        <taxon>Craniata</taxon>
        <taxon>Vertebrata</taxon>
        <taxon>Euteleostomi</taxon>
        <taxon>Amphibia</taxon>
        <taxon>Batrachia</taxon>
        <taxon>Anura</taxon>
        <taxon>Pipoidea</taxon>
        <taxon>Pipidae</taxon>
        <taxon>Xenopodinae</taxon>
        <taxon>Xenopus</taxon>
        <taxon>Xenopus</taxon>
    </lineage>
</organism>
<evidence type="ECO:0000250" key="1"/>
<evidence type="ECO:0000305" key="2"/>
<proteinExistence type="evidence at transcript level"/>
<protein>
    <recommendedName>
        <fullName>MIF4G domain-containing protein A</fullName>
    </recommendedName>
</protein>
<comment type="function">
    <text evidence="1">Functions in replication-dependent translation of histone mRNAs which differ from other eukaryotic mRNAs in that they do not end with a poly-A tail but a stem-loop. May participate in circularizing those mRNAs specifically enhancing their translation (By similarity).</text>
</comment>
<comment type="subunit">
    <text evidence="1">Interacts with eif4g1, eif4g2 and slbp; probably tethered by SLBP to the 3'-end of mRNAs ending with the histone stem-loop, it also interacts with eif4g1 which is bound to their 5'-end.</text>
</comment>
<comment type="subcellular location">
    <subcellularLocation>
        <location evidence="1">Cytoplasm</location>
    </subcellularLocation>
    <subcellularLocation>
        <location evidence="1">Nucleus</location>
    </subcellularLocation>
</comment>
<comment type="similarity">
    <text evidence="2">Belongs to the MIF4GD family.</text>
</comment>
<reference key="1">
    <citation type="submission" date="2007-03" db="EMBL/GenBank/DDBJ databases">
        <authorList>
            <consortium name="NIH - Xenopus Gene Collection (XGC) project"/>
        </authorList>
    </citation>
    <scope>NUCLEOTIDE SEQUENCE [LARGE SCALE MRNA]</scope>
    <source>
        <tissue>Embryo</tissue>
    </source>
</reference>
<name>M4GDA_XENLA</name>
<feature type="chain" id="PRO_0000337094" description="MIF4G domain-containing protein A">
    <location>
        <begin position="1"/>
        <end position="223"/>
    </location>
</feature>
<feature type="domain" description="MIF4G">
    <location>
        <begin position="7"/>
        <end position="206"/>
    </location>
</feature>